<protein>
    <recommendedName>
        <fullName>Uncharacterized protein RP722</fullName>
    </recommendedName>
</protein>
<name>Y722_RICPR</name>
<evidence type="ECO:0000255" key="1"/>
<evidence type="ECO:0000305" key="2"/>
<reference key="1">
    <citation type="journal article" date="1998" name="Nature">
        <title>The genome sequence of Rickettsia prowazekii and the origin of mitochondria.</title>
        <authorList>
            <person name="Andersson S.G.E."/>
            <person name="Zomorodipour A."/>
            <person name="Andersson J.O."/>
            <person name="Sicheritz-Ponten T."/>
            <person name="Alsmark U.C.M."/>
            <person name="Podowski R.M."/>
            <person name="Naeslund A.K."/>
            <person name="Eriksson A.-S."/>
            <person name="Winkler H.H."/>
            <person name="Kurland C.G."/>
        </authorList>
    </citation>
    <scope>NUCLEOTIDE SEQUENCE [LARGE SCALE GENOMIC DNA]</scope>
    <source>
        <strain>Madrid E</strain>
    </source>
</reference>
<proteinExistence type="predicted"/>
<dbReference type="EMBL" id="AJ235273">
    <property type="protein sequence ID" value="CAA15153.1"/>
    <property type="molecule type" value="Genomic_DNA"/>
</dbReference>
<dbReference type="PIR" id="A71632">
    <property type="entry name" value="A71632"/>
</dbReference>
<dbReference type="RefSeq" id="NP_221077.1">
    <property type="nucleotide sequence ID" value="NC_000963.1"/>
</dbReference>
<dbReference type="RefSeq" id="WP_004597055.1">
    <property type="nucleotide sequence ID" value="NC_000963.1"/>
</dbReference>
<dbReference type="SMR" id="Q9ZCK7"/>
<dbReference type="EnsemblBacteria" id="CAA15153">
    <property type="protein sequence ID" value="CAA15153"/>
    <property type="gene ID" value="CAA15153"/>
</dbReference>
<dbReference type="KEGG" id="rpr:RP722"/>
<dbReference type="PATRIC" id="fig|272947.5.peg.758"/>
<dbReference type="HOGENOM" id="CLU_1757432_0_0_5"/>
<dbReference type="OrthoDB" id="7160971at2"/>
<dbReference type="Proteomes" id="UP000002480">
    <property type="component" value="Chromosome"/>
</dbReference>
<dbReference type="GO" id="GO:0005886">
    <property type="term" value="C:plasma membrane"/>
    <property type="evidence" value="ECO:0007669"/>
    <property type="project" value="UniProtKB-SubCell"/>
</dbReference>
<comment type="subcellular location">
    <subcellularLocation>
        <location evidence="2">Cell membrane</location>
        <topology evidence="2">Multi-pass membrane protein</topology>
    </subcellularLocation>
</comment>
<keyword id="KW-1003">Cell membrane</keyword>
<keyword id="KW-0472">Membrane</keyword>
<keyword id="KW-1185">Reference proteome</keyword>
<keyword id="KW-0812">Transmembrane</keyword>
<keyword id="KW-1133">Transmembrane helix</keyword>
<gene>
    <name type="ordered locus">RP722</name>
</gene>
<feature type="chain" id="PRO_0000101411" description="Uncharacterized protein RP722">
    <location>
        <begin position="1"/>
        <end position="148"/>
    </location>
</feature>
<feature type="transmembrane region" description="Helical" evidence="1">
    <location>
        <begin position="20"/>
        <end position="42"/>
    </location>
</feature>
<feature type="transmembrane region" description="Helical" evidence="1">
    <location>
        <begin position="52"/>
        <end position="74"/>
    </location>
</feature>
<feature type="transmembrane region" description="Helical" evidence="1">
    <location>
        <begin position="118"/>
        <end position="135"/>
    </location>
</feature>
<sequence>MLKSLIYELLKSSIKQEEHYYSKTFFYFLNILGLVFIIIANYCYSSDSMKFYFLMQIGIISVISSMVIEAVRCYLKYKNRYRHLDCLRSNSGVLVGSISKTLIDLFSTKTLIRYLPTIIRYVPSTVITFIICTYIKRKFLKNFMYYTR</sequence>
<accession>Q9ZCK7</accession>
<organism>
    <name type="scientific">Rickettsia prowazekii (strain Madrid E)</name>
    <dbReference type="NCBI Taxonomy" id="272947"/>
    <lineage>
        <taxon>Bacteria</taxon>
        <taxon>Pseudomonadati</taxon>
        <taxon>Pseudomonadota</taxon>
        <taxon>Alphaproteobacteria</taxon>
        <taxon>Rickettsiales</taxon>
        <taxon>Rickettsiaceae</taxon>
        <taxon>Rickettsieae</taxon>
        <taxon>Rickettsia</taxon>
        <taxon>typhus group</taxon>
    </lineage>
</organism>